<comment type="function">
    <text evidence="1">Acts as a negative regulator of transcription.</text>
</comment>
<comment type="subcellular location">
    <subcellularLocation>
        <location evidence="2">Nucleus</location>
    </subcellularLocation>
</comment>
<comment type="tissue specificity">
    <text evidence="3">Highly expressed in developing brain and spinal cord.</text>
</comment>
<proteinExistence type="evidence at transcript level"/>
<sequence>MSKPSDHIKRPMNAFMVWSRGQRRKMAQENPKMHNSEISKRLGAEWKLLSEAEKRPYIDEAKRLRAQHMKEHPDYKYRPRRKPKNLLKKDRYVFPLPYLGDTDPLKAAGLPVGASDGLLSAPEKARAFLPPASAPYSLLDPAQFSSSAIQKMGEVPHTLATSALPYASTLGYQNGAFGSLSCPSQHTHTHPSPTNPGYVVPCNCTAWSASTLQPPVAYILFPGMTKTGIDPYSSAHATAM</sequence>
<feature type="chain" id="PRO_0000048760" description="Transcription factor SOX-14">
    <location>
        <begin position="1"/>
        <end position="240"/>
    </location>
</feature>
<feature type="DNA-binding region" description="HMG box" evidence="2">
    <location>
        <begin position="8"/>
        <end position="76"/>
    </location>
</feature>
<name>SOX14_MOUSE</name>
<reference key="1">
    <citation type="journal article" date="2000" name="Dev. Biol.">
        <title>The HMG box transcription factor gene Sox14 marks a novel subset of ventral interneurons and is regulated by sonic hedgehog.</title>
        <authorList>
            <person name="Hargrave M."/>
            <person name="Karunaratne A."/>
            <person name="Cox L."/>
            <person name="Wood S."/>
            <person name="Koopman P."/>
            <person name="Yamada T."/>
        </authorList>
    </citation>
    <scope>NUCLEOTIDE SEQUENCE [GENOMIC DNA / MRNA]</scope>
    <scope>TISSUE SPECIFICITY</scope>
    <source>
        <strain>129/Sv</strain>
    </source>
</reference>
<reference key="2">
    <citation type="journal article" date="2000" name="Hum. Genet.">
        <title>SOX14 is a candidate gene for limb defects associated with BPES and Mobius syndrome.</title>
        <authorList>
            <person name="Wilmore H.P."/>
            <person name="Smith M.J."/>
            <person name="Wilcox S.A."/>
            <person name="Bell K.M."/>
            <person name="Sinclair A.H."/>
        </authorList>
    </citation>
    <scope>NUCLEOTIDE SEQUENCE [GENOMIC DNA] OF 15-229</scope>
</reference>
<reference key="3">
    <citation type="journal article" date="1993" name="Nucleic Acids Res.">
        <title>Seven new members of the Sox gene family expressed during mouse development.</title>
        <authorList>
            <person name="Wright E.M."/>
            <person name="Snopek B."/>
            <person name="Koopman P."/>
        </authorList>
    </citation>
    <scope>NUCLEOTIDE SEQUENCE [MRNA] OF 16-71</scope>
</reference>
<gene>
    <name type="primary">Sox14</name>
    <name type="synonym">Sox-14</name>
</gene>
<protein>
    <recommendedName>
        <fullName>Transcription factor SOX-14</fullName>
    </recommendedName>
</protein>
<keyword id="KW-0238">DNA-binding</keyword>
<keyword id="KW-0539">Nucleus</keyword>
<keyword id="KW-1185">Reference proteome</keyword>
<keyword id="KW-0678">Repressor</keyword>
<keyword id="KW-0804">Transcription</keyword>
<keyword id="KW-0805">Transcription regulation</keyword>
<evidence type="ECO:0000250" key="1"/>
<evidence type="ECO:0000255" key="2">
    <source>
        <dbReference type="PROSITE-ProRule" id="PRU00267"/>
    </source>
</evidence>
<evidence type="ECO:0000269" key="3">
    <source>
    </source>
</evidence>
<accession>Q04892</accession>
<accession>Q9JLC9</accession>
<accession>Q9JLD0</accession>
<accession>Q9QXU4</accession>
<dbReference type="EMBL" id="AF193437">
    <property type="protein sequence ID" value="AAF62397.1"/>
    <property type="molecule type" value="Genomic_DNA"/>
</dbReference>
<dbReference type="EMBL" id="AF193435">
    <property type="protein sequence ID" value="AAF62396.1"/>
    <property type="molecule type" value="mRNA"/>
</dbReference>
<dbReference type="EMBL" id="AF182357">
    <property type="protein sequence ID" value="AAF19353.1"/>
    <property type="molecule type" value="Genomic_DNA"/>
</dbReference>
<dbReference type="EMBL" id="Z18963">
    <property type="protein sequence ID" value="CAA79488.1"/>
    <property type="molecule type" value="mRNA"/>
</dbReference>
<dbReference type="CCDS" id="CCDS57695.1"/>
<dbReference type="PIR" id="S30244">
    <property type="entry name" value="S30244"/>
</dbReference>
<dbReference type="RefSeq" id="NP_035570.1">
    <property type="nucleotide sequence ID" value="NM_011440.1"/>
</dbReference>
<dbReference type="SMR" id="Q04892"/>
<dbReference type="BioGRID" id="203401">
    <property type="interactions" value="1"/>
</dbReference>
<dbReference type="FunCoup" id="Q04892">
    <property type="interactions" value="19"/>
</dbReference>
<dbReference type="STRING" id="10090.ENSMUSP00000091310"/>
<dbReference type="iPTMnet" id="Q04892"/>
<dbReference type="PhosphoSitePlus" id="Q04892"/>
<dbReference type="PaxDb" id="10090-ENSMUSP00000091310"/>
<dbReference type="PeptideAtlas" id="Q04892"/>
<dbReference type="Antibodypedia" id="17867">
    <property type="antibodies" value="146 antibodies from 25 providers"/>
</dbReference>
<dbReference type="Ensembl" id="ENSMUST00000054819.10">
    <property type="protein sequence ID" value="ENSMUSP00000091310.6"/>
    <property type="gene ID" value="ENSMUSG00000053747.10"/>
</dbReference>
<dbReference type="GeneID" id="20669"/>
<dbReference type="KEGG" id="mmu:20669"/>
<dbReference type="UCSC" id="uc012gzb.1">
    <property type="organism name" value="mouse"/>
</dbReference>
<dbReference type="AGR" id="MGI:98362"/>
<dbReference type="CTD" id="8403"/>
<dbReference type="MGI" id="MGI:98362">
    <property type="gene designation" value="Sox14"/>
</dbReference>
<dbReference type="VEuPathDB" id="HostDB:ENSMUSG00000053747"/>
<dbReference type="eggNOG" id="KOG0527">
    <property type="taxonomic scope" value="Eukaryota"/>
</dbReference>
<dbReference type="GeneTree" id="ENSGT00940000160749"/>
<dbReference type="InParanoid" id="Q04892"/>
<dbReference type="OMA" id="KMTQEMP"/>
<dbReference type="OrthoDB" id="6247875at2759"/>
<dbReference type="PhylomeDB" id="Q04892"/>
<dbReference type="TreeFam" id="TF351735"/>
<dbReference type="BioGRID-ORCS" id="20669">
    <property type="hits" value="2 hits in 78 CRISPR screens"/>
</dbReference>
<dbReference type="ChiTaRS" id="Sox14">
    <property type="organism name" value="mouse"/>
</dbReference>
<dbReference type="PRO" id="PR:Q04892"/>
<dbReference type="Proteomes" id="UP000000589">
    <property type="component" value="Chromosome 9"/>
</dbReference>
<dbReference type="RNAct" id="Q04892">
    <property type="molecule type" value="protein"/>
</dbReference>
<dbReference type="Bgee" id="ENSMUSG00000053747">
    <property type="expression patterns" value="Expressed in urethra and 44 other cell types or tissues"/>
</dbReference>
<dbReference type="ExpressionAtlas" id="Q04892">
    <property type="expression patterns" value="baseline and differential"/>
</dbReference>
<dbReference type="GO" id="GO:0005634">
    <property type="term" value="C:nucleus"/>
    <property type="evidence" value="ECO:0007669"/>
    <property type="project" value="UniProtKB-SubCell"/>
</dbReference>
<dbReference type="GO" id="GO:0005667">
    <property type="term" value="C:transcription regulator complex"/>
    <property type="evidence" value="ECO:0000314"/>
    <property type="project" value="MGI"/>
</dbReference>
<dbReference type="GO" id="GO:0003682">
    <property type="term" value="F:chromatin binding"/>
    <property type="evidence" value="ECO:0000314"/>
    <property type="project" value="MGI"/>
</dbReference>
<dbReference type="GO" id="GO:0000981">
    <property type="term" value="F:DNA-binding transcription factor activity, RNA polymerase II-specific"/>
    <property type="evidence" value="ECO:0000314"/>
    <property type="project" value="MGI"/>
</dbReference>
<dbReference type="GO" id="GO:0043565">
    <property type="term" value="F:sequence-specific DNA binding"/>
    <property type="evidence" value="ECO:0000250"/>
    <property type="project" value="UniProtKB"/>
</dbReference>
<dbReference type="GO" id="GO:1990837">
    <property type="term" value="F:sequence-specific double-stranded DNA binding"/>
    <property type="evidence" value="ECO:0007669"/>
    <property type="project" value="Ensembl"/>
</dbReference>
<dbReference type="GO" id="GO:0009649">
    <property type="term" value="P:entrainment of circadian clock"/>
    <property type="evidence" value="ECO:0000315"/>
    <property type="project" value="MGI"/>
</dbReference>
<dbReference type="GO" id="GO:0045892">
    <property type="term" value="P:negative regulation of DNA-templated transcription"/>
    <property type="evidence" value="ECO:0000250"/>
    <property type="project" value="UniProtKB"/>
</dbReference>
<dbReference type="GO" id="GO:0000122">
    <property type="term" value="P:negative regulation of transcription by RNA polymerase II"/>
    <property type="evidence" value="ECO:0000250"/>
    <property type="project" value="UniProtKB"/>
</dbReference>
<dbReference type="GO" id="GO:2001222">
    <property type="term" value="P:regulation of neuron migration"/>
    <property type="evidence" value="ECO:0000315"/>
    <property type="project" value="MGI"/>
</dbReference>
<dbReference type="GO" id="GO:0007601">
    <property type="term" value="P:visual perception"/>
    <property type="evidence" value="ECO:0000315"/>
    <property type="project" value="MGI"/>
</dbReference>
<dbReference type="CDD" id="cd01388">
    <property type="entry name" value="HMG-box_SoxB"/>
    <property type="match status" value="1"/>
</dbReference>
<dbReference type="FunFam" id="1.10.30.10:FF:000002">
    <property type="entry name" value="transcription factor Sox-2"/>
    <property type="match status" value="1"/>
</dbReference>
<dbReference type="Gene3D" id="1.10.30.10">
    <property type="entry name" value="High mobility group box domain"/>
    <property type="match status" value="1"/>
</dbReference>
<dbReference type="InterPro" id="IPR009071">
    <property type="entry name" value="HMG_box_dom"/>
</dbReference>
<dbReference type="InterPro" id="IPR036910">
    <property type="entry name" value="HMG_box_dom_sf"/>
</dbReference>
<dbReference type="InterPro" id="IPR022097">
    <property type="entry name" value="SOX_fam"/>
</dbReference>
<dbReference type="InterPro" id="IPR050140">
    <property type="entry name" value="SRY-related_HMG-box_TF-like"/>
</dbReference>
<dbReference type="PANTHER" id="PTHR10270">
    <property type="entry name" value="SOX TRANSCRIPTION FACTOR"/>
    <property type="match status" value="1"/>
</dbReference>
<dbReference type="PANTHER" id="PTHR10270:SF107">
    <property type="entry name" value="TRANSCRIPTION FACTOR SOX-14"/>
    <property type="match status" value="1"/>
</dbReference>
<dbReference type="Pfam" id="PF00505">
    <property type="entry name" value="HMG_box"/>
    <property type="match status" value="1"/>
</dbReference>
<dbReference type="Pfam" id="PF12336">
    <property type="entry name" value="SOXp"/>
    <property type="match status" value="1"/>
</dbReference>
<dbReference type="SMART" id="SM00398">
    <property type="entry name" value="HMG"/>
    <property type="match status" value="1"/>
</dbReference>
<dbReference type="SUPFAM" id="SSF47095">
    <property type="entry name" value="HMG-box"/>
    <property type="match status" value="1"/>
</dbReference>
<dbReference type="PROSITE" id="PS50118">
    <property type="entry name" value="HMG_BOX_2"/>
    <property type="match status" value="1"/>
</dbReference>
<organism>
    <name type="scientific">Mus musculus</name>
    <name type="common">Mouse</name>
    <dbReference type="NCBI Taxonomy" id="10090"/>
    <lineage>
        <taxon>Eukaryota</taxon>
        <taxon>Metazoa</taxon>
        <taxon>Chordata</taxon>
        <taxon>Craniata</taxon>
        <taxon>Vertebrata</taxon>
        <taxon>Euteleostomi</taxon>
        <taxon>Mammalia</taxon>
        <taxon>Eutheria</taxon>
        <taxon>Euarchontoglires</taxon>
        <taxon>Glires</taxon>
        <taxon>Rodentia</taxon>
        <taxon>Myomorpha</taxon>
        <taxon>Muroidea</taxon>
        <taxon>Muridae</taxon>
        <taxon>Murinae</taxon>
        <taxon>Mus</taxon>
        <taxon>Mus</taxon>
    </lineage>
</organism>